<name>RS28A_NEUCR</name>
<evidence type="ECO:0000269" key="1">
    <source>
    </source>
</evidence>
<evidence type="ECO:0000303" key="2">
    <source>
    </source>
</evidence>
<evidence type="ECO:0000305" key="3"/>
<evidence type="ECO:0000305" key="4">
    <source>
    </source>
</evidence>
<evidence type="ECO:0007744" key="5">
    <source>
        <dbReference type="PDB" id="7R81"/>
    </source>
</evidence>
<accession>Q7S6W5</accession>
<proteinExistence type="evidence at protein level"/>
<protein>
    <recommendedName>
        <fullName evidence="2">Small ribosomal subunit protein eS28</fullName>
    </recommendedName>
    <alternativeName>
        <fullName>40S ribosomal protein S28</fullName>
    </alternativeName>
</protein>
<reference key="1">
    <citation type="journal article" date="2003" name="Nature">
        <title>The genome sequence of the filamentous fungus Neurospora crassa.</title>
        <authorList>
            <person name="Galagan J.E."/>
            <person name="Calvo S.E."/>
            <person name="Borkovich K.A."/>
            <person name="Selker E.U."/>
            <person name="Read N.D."/>
            <person name="Jaffe D.B."/>
            <person name="FitzHugh W."/>
            <person name="Ma L.-J."/>
            <person name="Smirnov S."/>
            <person name="Purcell S."/>
            <person name="Rehman B."/>
            <person name="Elkins T."/>
            <person name="Engels R."/>
            <person name="Wang S."/>
            <person name="Nielsen C.B."/>
            <person name="Butler J."/>
            <person name="Endrizzi M."/>
            <person name="Qui D."/>
            <person name="Ianakiev P."/>
            <person name="Bell-Pedersen D."/>
            <person name="Nelson M.A."/>
            <person name="Werner-Washburne M."/>
            <person name="Selitrennikoff C.P."/>
            <person name="Kinsey J.A."/>
            <person name="Braun E.L."/>
            <person name="Zelter A."/>
            <person name="Schulte U."/>
            <person name="Kothe G.O."/>
            <person name="Jedd G."/>
            <person name="Mewes H.-W."/>
            <person name="Staben C."/>
            <person name="Marcotte E."/>
            <person name="Greenberg D."/>
            <person name="Roy A."/>
            <person name="Foley K."/>
            <person name="Naylor J."/>
            <person name="Stange-Thomann N."/>
            <person name="Barrett R."/>
            <person name="Gnerre S."/>
            <person name="Kamal M."/>
            <person name="Kamvysselis M."/>
            <person name="Mauceli E.W."/>
            <person name="Bielke C."/>
            <person name="Rudd S."/>
            <person name="Frishman D."/>
            <person name="Krystofova S."/>
            <person name="Rasmussen C."/>
            <person name="Metzenberg R.L."/>
            <person name="Perkins D.D."/>
            <person name="Kroken S."/>
            <person name="Cogoni C."/>
            <person name="Macino G."/>
            <person name="Catcheside D.E.A."/>
            <person name="Li W."/>
            <person name="Pratt R.J."/>
            <person name="Osmani S.A."/>
            <person name="DeSouza C.P.C."/>
            <person name="Glass N.L."/>
            <person name="Orbach M.J."/>
            <person name="Berglund J.A."/>
            <person name="Voelker R."/>
            <person name="Yarden O."/>
            <person name="Plamann M."/>
            <person name="Seiler S."/>
            <person name="Dunlap J.C."/>
            <person name="Radford A."/>
            <person name="Aramayo R."/>
            <person name="Natvig D.O."/>
            <person name="Alex L.A."/>
            <person name="Mannhaupt G."/>
            <person name="Ebbole D.J."/>
            <person name="Freitag M."/>
            <person name="Paulsen I."/>
            <person name="Sachs M.S."/>
            <person name="Lander E.S."/>
            <person name="Nusbaum C."/>
            <person name="Birren B.W."/>
        </authorList>
    </citation>
    <scope>NUCLEOTIDE SEQUENCE [LARGE SCALE GENOMIC DNA]</scope>
    <source>
        <strain>ATCC 24698 / 74-OR23-1A / CBS 708.71 / DSM 1257 / FGSC 987</strain>
    </source>
</reference>
<reference evidence="5" key="2">
    <citation type="journal article" date="2021" name="Proc. Natl. Acad. Sci. U.S.A.">
        <title>Structure of the translating Neurospora ribosome arrested by cycloheximide.</title>
        <authorList>
            <person name="Shen L."/>
            <person name="Su Z."/>
            <person name="Yang K."/>
            <person name="Wu C."/>
            <person name="Becker T."/>
            <person name="Bell-Pedersen D."/>
            <person name="Zhang J."/>
            <person name="Sachs M.S."/>
        </authorList>
    </citation>
    <scope>STRUCTURE BY ELECTRON MICROSCOPY (2.70 ANGSTROMS)</scope>
</reference>
<keyword id="KW-0002">3D-structure</keyword>
<keyword id="KW-0963">Cytoplasm</keyword>
<keyword id="KW-1185">Reference proteome</keyword>
<keyword id="KW-0687">Ribonucleoprotein</keyword>
<keyword id="KW-0689">Ribosomal protein</keyword>
<organism>
    <name type="scientific">Neurospora crassa (strain ATCC 24698 / 74-OR23-1A / CBS 708.71 / DSM 1257 / FGSC 987)</name>
    <dbReference type="NCBI Taxonomy" id="367110"/>
    <lineage>
        <taxon>Eukaryota</taxon>
        <taxon>Fungi</taxon>
        <taxon>Dikarya</taxon>
        <taxon>Ascomycota</taxon>
        <taxon>Pezizomycotina</taxon>
        <taxon>Sordariomycetes</taxon>
        <taxon>Sordariomycetidae</taxon>
        <taxon>Sordariales</taxon>
        <taxon>Sordariaceae</taxon>
        <taxon>Neurospora</taxon>
    </lineage>
</organism>
<feature type="chain" id="PRO_0000136840" description="Small ribosomal subunit protein eS28">
    <location>
        <begin position="1"/>
        <end position="68"/>
    </location>
</feature>
<gene>
    <name type="primary">rps-28</name>
    <name type="ORF">NCU05599</name>
</gene>
<comment type="function">
    <text evidence="4">Component of the ribosome, a large ribonucleoprotein complex responsible for the synthesis of proteins in the cell. The small ribosomal subunit (SSU) binds messenger RNAs (mRNAs) and translates the encoded message by selecting cognate aminoacyl-transfer RNA (tRNA) molecules. The large subunit (LSU) contains the ribosomal catalytic site termed the peptidyl transferase center (PTC), which catalyzes the formation of peptide bonds, thereby polymerizing the amino acids delivered by tRNAs into a polypeptide chain. The nascent polypeptides leave the ribosome through a tunnel in the LSU and interact with protein factors that function in enzymatic processing, targeting, and the membrane insertion of nascent chains at the exit of the ribosomal tunnel.</text>
</comment>
<comment type="subunit">
    <text evidence="1">Component of the small ribosomal subunit (SSU). Mature N.crassa ribosomes consist of a small (40S) and a large (60S) subunit. The 40S small subunit contains 1 molecule of ribosomal RNA (18S rRNA) and at least 32 different proteins. The large 60S subunit contains 3 rRNA molecules (26S, 5.8S and 5S rRNA) and at least 42 different proteins.</text>
</comment>
<comment type="subcellular location">
    <subcellularLocation>
        <location evidence="1">Cytoplasm</location>
    </subcellularLocation>
</comment>
<comment type="similarity">
    <text evidence="3">Belongs to the eukaryotic ribosomal protein eS28 family.</text>
</comment>
<sequence length="68" mass="7721">MDSSKAPVKLVKVTRVLGRTGSRGGVTQVRVEFMDDQTRSIIRNVKGPVREDDILVLLESEREARRLR</sequence>
<dbReference type="EMBL" id="CM002241">
    <property type="protein sequence ID" value="EAA31325.1"/>
    <property type="molecule type" value="Genomic_DNA"/>
</dbReference>
<dbReference type="RefSeq" id="XP_960561.1">
    <property type="nucleotide sequence ID" value="XM_955468.3"/>
</dbReference>
<dbReference type="PDB" id="7R81">
    <property type="method" value="EM"/>
    <property type="resolution" value="2.70 A"/>
    <property type="chains" value="d2=1-68"/>
</dbReference>
<dbReference type="PDBsum" id="7R81"/>
<dbReference type="EMDB" id="EMD-24307"/>
<dbReference type="SMR" id="Q7S6W5"/>
<dbReference type="FunCoup" id="Q7S6W5">
    <property type="interactions" value="865"/>
</dbReference>
<dbReference type="STRING" id="367110.Q7S6W5"/>
<dbReference type="PaxDb" id="5141-EFNCRP00000005655"/>
<dbReference type="EnsemblFungi" id="EAA31325">
    <property type="protein sequence ID" value="EAA31325"/>
    <property type="gene ID" value="NCU05599"/>
</dbReference>
<dbReference type="GeneID" id="3876676"/>
<dbReference type="KEGG" id="ncr:NCU05599"/>
<dbReference type="VEuPathDB" id="FungiDB:NCU05599"/>
<dbReference type="HOGENOM" id="CLU_178987_1_0_1"/>
<dbReference type="InParanoid" id="Q7S6W5"/>
<dbReference type="OMA" id="NTGMHGE"/>
<dbReference type="OrthoDB" id="10258930at2759"/>
<dbReference type="Proteomes" id="UP000001805">
    <property type="component" value="Chromosome 5, Linkage Group VI"/>
</dbReference>
<dbReference type="GO" id="GO:0022627">
    <property type="term" value="C:cytosolic small ribosomal subunit"/>
    <property type="evidence" value="ECO:0000318"/>
    <property type="project" value="GO_Central"/>
</dbReference>
<dbReference type="GO" id="GO:0003735">
    <property type="term" value="F:structural constituent of ribosome"/>
    <property type="evidence" value="ECO:0000318"/>
    <property type="project" value="GO_Central"/>
</dbReference>
<dbReference type="GO" id="GO:0030490">
    <property type="term" value="P:maturation of SSU-rRNA"/>
    <property type="evidence" value="ECO:0000318"/>
    <property type="project" value="GO_Central"/>
</dbReference>
<dbReference type="GO" id="GO:0000028">
    <property type="term" value="P:ribosomal small subunit assembly"/>
    <property type="evidence" value="ECO:0000318"/>
    <property type="project" value="GO_Central"/>
</dbReference>
<dbReference type="GO" id="GO:0006412">
    <property type="term" value="P:translation"/>
    <property type="evidence" value="ECO:0007669"/>
    <property type="project" value="InterPro"/>
</dbReference>
<dbReference type="CDD" id="cd04457">
    <property type="entry name" value="S1_S28E"/>
    <property type="match status" value="1"/>
</dbReference>
<dbReference type="FunFam" id="2.40.50.140:FF:000025">
    <property type="entry name" value="40S ribosomal protein S28"/>
    <property type="match status" value="1"/>
</dbReference>
<dbReference type="Gene3D" id="2.40.50.140">
    <property type="entry name" value="Nucleic acid-binding proteins"/>
    <property type="match status" value="1"/>
</dbReference>
<dbReference type="HAMAP" id="MF_00292">
    <property type="entry name" value="Ribosomal_eS28"/>
    <property type="match status" value="1"/>
</dbReference>
<dbReference type="InterPro" id="IPR012340">
    <property type="entry name" value="NA-bd_OB-fold"/>
</dbReference>
<dbReference type="InterPro" id="IPR000289">
    <property type="entry name" value="Ribosomal_eS28"/>
</dbReference>
<dbReference type="InterPro" id="IPR028626">
    <property type="entry name" value="Ribosomal_eS28_CS"/>
</dbReference>
<dbReference type="PANTHER" id="PTHR10769">
    <property type="entry name" value="40S RIBOSOMAL PROTEIN S28"/>
    <property type="match status" value="1"/>
</dbReference>
<dbReference type="PANTHER" id="PTHR10769:SF3">
    <property type="entry name" value="SMALL RIBOSOMAL SUBUNIT PROTEIN ES28"/>
    <property type="match status" value="1"/>
</dbReference>
<dbReference type="Pfam" id="PF01200">
    <property type="entry name" value="Ribosomal_S28e"/>
    <property type="match status" value="1"/>
</dbReference>
<dbReference type="SUPFAM" id="SSF50249">
    <property type="entry name" value="Nucleic acid-binding proteins"/>
    <property type="match status" value="1"/>
</dbReference>
<dbReference type="PROSITE" id="PS00961">
    <property type="entry name" value="RIBOSOMAL_S28E"/>
    <property type="match status" value="1"/>
</dbReference>